<gene>
    <name type="primary">tldD</name>
    <name type="ordered locus">SF3283</name>
    <name type="ordered locus">S3499</name>
</gene>
<proteinExistence type="inferred from homology"/>
<reference key="1">
    <citation type="journal article" date="2002" name="Nucleic Acids Res.">
        <title>Genome sequence of Shigella flexneri 2a: insights into pathogenicity through comparison with genomes of Escherichia coli K12 and O157.</title>
        <authorList>
            <person name="Jin Q."/>
            <person name="Yuan Z."/>
            <person name="Xu J."/>
            <person name="Wang Y."/>
            <person name="Shen Y."/>
            <person name="Lu W."/>
            <person name="Wang J."/>
            <person name="Liu H."/>
            <person name="Yang J."/>
            <person name="Yang F."/>
            <person name="Zhang X."/>
            <person name="Zhang J."/>
            <person name="Yang G."/>
            <person name="Wu H."/>
            <person name="Qu D."/>
            <person name="Dong J."/>
            <person name="Sun L."/>
            <person name="Xue Y."/>
            <person name="Zhao A."/>
            <person name="Gao Y."/>
            <person name="Zhu J."/>
            <person name="Kan B."/>
            <person name="Ding K."/>
            <person name="Chen S."/>
            <person name="Cheng H."/>
            <person name="Yao Z."/>
            <person name="He B."/>
            <person name="Chen R."/>
            <person name="Ma D."/>
            <person name="Qiang B."/>
            <person name="Wen Y."/>
            <person name="Hou Y."/>
            <person name="Yu J."/>
        </authorList>
    </citation>
    <scope>NUCLEOTIDE SEQUENCE [LARGE SCALE GENOMIC DNA]</scope>
    <source>
        <strain>301 / Serotype 2a</strain>
    </source>
</reference>
<reference key="2">
    <citation type="journal article" date="2003" name="Infect. Immun.">
        <title>Complete genome sequence and comparative genomics of Shigella flexneri serotype 2a strain 2457T.</title>
        <authorList>
            <person name="Wei J."/>
            <person name="Goldberg M.B."/>
            <person name="Burland V."/>
            <person name="Venkatesan M.M."/>
            <person name="Deng W."/>
            <person name="Fournier G."/>
            <person name="Mayhew G.F."/>
            <person name="Plunkett G. III"/>
            <person name="Rose D.J."/>
            <person name="Darling A."/>
            <person name="Mau B."/>
            <person name="Perna N.T."/>
            <person name="Payne S.M."/>
            <person name="Runyen-Janecky L.J."/>
            <person name="Zhou S."/>
            <person name="Schwartz D.C."/>
            <person name="Blattner F.R."/>
        </authorList>
    </citation>
    <scope>NUCLEOTIDE SEQUENCE [LARGE SCALE GENOMIC DNA]</scope>
    <source>
        <strain>ATCC 700930 / 2457T / Serotype 2a</strain>
    </source>
</reference>
<feature type="chain" id="PRO_0000142360" description="Metalloprotease TldD homolog">
    <location>
        <begin position="1"/>
        <end position="481"/>
    </location>
</feature>
<sequence>MSLNLVSEQLLAANGLKHQDLFAILGQLAERRLDYGDLYFQSSYHESWVLEDRIIKDGSYNIDQGVGVRAISGEKTGFAYADQISLLALEQSAQAARTIVRDSGDGKVQTLGAVEHSPLYTSVDPLQSMSREEKLDILRRVDKVAREADKRVQEVTASLSGVYELILVAATDGTLAADVRPLVRLSVSVLVEEDGKRERGASGGGGRFGYEFFLADLDGEVRADAWAKEAVRMALVNLSAVAAPAGTMPVVLGAGWPGVLLHEAVGHGLEGDFNRRGTSVFSGQVGELVASELCTVVDDGTMVDRRGSVAIDDEGTPGQYNVLIENGILKGYMQDKLNARLMGMTPTGNGRRESYAHLPMPRMTNTYMLPGKSTPQEIIESVEYGIYAPNFGGGQVDITSGKFVFSTSEAYLIENGKVTKPVKGATLIGSGIETMQQISMVGNDLKLDNGVGVCGKEGQSLPVGVGQPTLKVDNLTVGGTA</sequence>
<protein>
    <recommendedName>
        <fullName>Metalloprotease TldD homolog</fullName>
        <ecNumber>3.4.-.-</ecNumber>
    </recommendedName>
</protein>
<name>TLDD_SHIFL</name>
<organism>
    <name type="scientific">Shigella flexneri</name>
    <dbReference type="NCBI Taxonomy" id="623"/>
    <lineage>
        <taxon>Bacteria</taxon>
        <taxon>Pseudomonadati</taxon>
        <taxon>Pseudomonadota</taxon>
        <taxon>Gammaproteobacteria</taxon>
        <taxon>Enterobacterales</taxon>
        <taxon>Enterobacteriaceae</taxon>
        <taxon>Shigella</taxon>
    </lineage>
</organism>
<keyword id="KW-0378">Hydrolase</keyword>
<keyword id="KW-0482">Metalloprotease</keyword>
<keyword id="KW-0645">Protease</keyword>
<keyword id="KW-1185">Reference proteome</keyword>
<comment type="function">
    <text evidence="1">Metalloprotease involved in CcdA degradation. Suppresses the inhibitory activity of the carbon storage regulator (CsrA) (By similarity).</text>
</comment>
<comment type="similarity">
    <text evidence="2">Belongs to the peptidase U62 family.</text>
</comment>
<evidence type="ECO:0000250" key="1"/>
<evidence type="ECO:0000305" key="2"/>
<accession>P0AGH0</accession>
<accession>P46473</accession>
<dbReference type="EC" id="3.4.-.-"/>
<dbReference type="EMBL" id="AE005674">
    <property type="protein sequence ID" value="AAN44747.1"/>
    <property type="molecule type" value="Genomic_DNA"/>
</dbReference>
<dbReference type="EMBL" id="AE014073">
    <property type="protein sequence ID" value="AAP18558.1"/>
    <property type="molecule type" value="Genomic_DNA"/>
</dbReference>
<dbReference type="RefSeq" id="NP_709040.1">
    <property type="nucleotide sequence ID" value="NC_004337.2"/>
</dbReference>
<dbReference type="RefSeq" id="WP_000055909.1">
    <property type="nucleotide sequence ID" value="NZ_WPGW01000026.1"/>
</dbReference>
<dbReference type="SMR" id="P0AGH0"/>
<dbReference type="STRING" id="198214.SF3283"/>
<dbReference type="PaxDb" id="198214-SF3283"/>
<dbReference type="GeneID" id="1027079"/>
<dbReference type="GeneID" id="75173414"/>
<dbReference type="KEGG" id="sfl:SF3283"/>
<dbReference type="KEGG" id="sfx:S3499"/>
<dbReference type="PATRIC" id="fig|198214.7.peg.3890"/>
<dbReference type="HOGENOM" id="CLU_026425_1_0_6"/>
<dbReference type="Proteomes" id="UP000001006">
    <property type="component" value="Chromosome"/>
</dbReference>
<dbReference type="Proteomes" id="UP000002673">
    <property type="component" value="Chromosome"/>
</dbReference>
<dbReference type="GO" id="GO:0005829">
    <property type="term" value="C:cytosol"/>
    <property type="evidence" value="ECO:0007669"/>
    <property type="project" value="TreeGrafter"/>
</dbReference>
<dbReference type="GO" id="GO:0008237">
    <property type="term" value="F:metallopeptidase activity"/>
    <property type="evidence" value="ECO:0007669"/>
    <property type="project" value="UniProtKB-KW"/>
</dbReference>
<dbReference type="GO" id="GO:0006508">
    <property type="term" value="P:proteolysis"/>
    <property type="evidence" value="ECO:0007669"/>
    <property type="project" value="UniProtKB-KW"/>
</dbReference>
<dbReference type="FunFam" id="3.30.2290.10:FF:000001">
    <property type="entry name" value="Metalloprotease TldD homolog"/>
    <property type="match status" value="1"/>
</dbReference>
<dbReference type="Gene3D" id="3.30.2290.10">
    <property type="entry name" value="PmbA/TldD superfamily"/>
    <property type="match status" value="1"/>
</dbReference>
<dbReference type="InterPro" id="IPR045569">
    <property type="entry name" value="Metalloprtase-TldD/E_C"/>
</dbReference>
<dbReference type="InterPro" id="IPR045570">
    <property type="entry name" value="Metalloprtase-TldD/E_cen_dom"/>
</dbReference>
<dbReference type="InterPro" id="IPR002510">
    <property type="entry name" value="Metalloprtase-TldD/E_N"/>
</dbReference>
<dbReference type="InterPro" id="IPR051463">
    <property type="entry name" value="Peptidase_U62_metallo"/>
</dbReference>
<dbReference type="InterPro" id="IPR025502">
    <property type="entry name" value="TldD"/>
</dbReference>
<dbReference type="InterPro" id="IPR035068">
    <property type="entry name" value="TldD/PmbA_N"/>
</dbReference>
<dbReference type="InterPro" id="IPR036059">
    <property type="entry name" value="TldD/PmbA_sf"/>
</dbReference>
<dbReference type="NCBIfam" id="NF008006">
    <property type="entry name" value="PRK10735.1"/>
    <property type="match status" value="1"/>
</dbReference>
<dbReference type="PANTHER" id="PTHR30624:SF4">
    <property type="entry name" value="METALLOPROTEASE TLDD"/>
    <property type="match status" value="1"/>
</dbReference>
<dbReference type="PANTHER" id="PTHR30624">
    <property type="entry name" value="UNCHARACTERIZED PROTEIN TLDD AND PMBA"/>
    <property type="match status" value="1"/>
</dbReference>
<dbReference type="Pfam" id="PF01523">
    <property type="entry name" value="PmbA_TldD_1st"/>
    <property type="match status" value="1"/>
</dbReference>
<dbReference type="Pfam" id="PF19290">
    <property type="entry name" value="PmbA_TldD_2nd"/>
    <property type="match status" value="1"/>
</dbReference>
<dbReference type="Pfam" id="PF19289">
    <property type="entry name" value="PmbA_TldD_3rd"/>
    <property type="match status" value="1"/>
</dbReference>
<dbReference type="PIRSF" id="PIRSF004919">
    <property type="entry name" value="TldD"/>
    <property type="match status" value="1"/>
</dbReference>
<dbReference type="SUPFAM" id="SSF111283">
    <property type="entry name" value="Putative modulator of DNA gyrase, PmbA/TldD"/>
    <property type="match status" value="1"/>
</dbReference>